<dbReference type="InParanoid" id="P86520"/>
<dbReference type="Proteomes" id="UP000008827">
    <property type="component" value="Unplaced"/>
</dbReference>
<dbReference type="GO" id="GO:0090729">
    <property type="term" value="F:toxin activity"/>
    <property type="evidence" value="ECO:0007669"/>
    <property type="project" value="UniProtKB-KW"/>
</dbReference>
<dbReference type="GO" id="GO:0050832">
    <property type="term" value="P:defense response to fungus"/>
    <property type="evidence" value="ECO:0007669"/>
    <property type="project" value="UniProtKB-KW"/>
</dbReference>
<dbReference type="GO" id="GO:0031640">
    <property type="term" value="P:killing of cells of another organism"/>
    <property type="evidence" value="ECO:0007669"/>
    <property type="project" value="UniProtKB-KW"/>
</dbReference>
<reference evidence="7" key="1">
    <citation type="journal article" date="2008" name="Toxicon">
        <title>SBTX, a new toxic protein distinct from soyatoxin and other toxic soybean [Glycine max] proteins, and its inhibitory effect on Cercospora sojina growth.</title>
        <authorList>
            <person name="Vasconcelos I.M."/>
            <person name="Morais J.K."/>
            <person name="Siebra E.A."/>
            <person name="Carlini C.R."/>
            <person name="Sousa D.O."/>
            <person name="Beltramini L.M."/>
            <person name="Melo V.M."/>
            <person name="Oliveira J.T."/>
        </authorList>
    </citation>
    <scope>PROTEIN SEQUENCE</scope>
    <scope>FUNCTION</scope>
    <scope>BIOPHYSICOCHEMICAL PROPERTIES</scope>
    <scope>SUBUNIT</scope>
    <scope>GLYCOSYLATION</scope>
    <scope>TOXIC DOSE</scope>
    <source>
        <strain evidence="1">cv. BR-10</strain>
        <tissue evidence="1">Seed</tissue>
    </source>
</reference>
<reference evidence="7" key="2">
    <citation type="submission" date="2010-03" db="UniProtKB">
        <authorList>
            <person name="Oliveira H.D."/>
        </authorList>
    </citation>
    <scope>TISSUE SPECIFICITY</scope>
    <scope>INDUCTION</scope>
</reference>
<reference key="3">
    <citation type="journal article" date="2010" name="J. Agric. Food Chem.">
        <title>Soybean toxin (SBTX), a protein from soybeans that inhibits the life cycle of plant and human pathogenic fungi.</title>
        <authorList>
            <person name="Morais J.K."/>
            <person name="Gomes V.M."/>
            <person name="Oliveira J.T."/>
            <person name="Santos I.S."/>
            <person name="Da Cunha M."/>
            <person name="Oliveira H.D."/>
            <person name="Oliveira H.P."/>
            <person name="Sousa D.O."/>
            <person name="Vasconcelos I.M."/>
        </authorList>
    </citation>
    <scope>PARTIAL PROTEIN SEQUENCE</scope>
    <scope>FUNCTION</scope>
    <scope>TOXIC DOSE</scope>
    <source>
        <tissue evidence="6">Seed</tissue>
    </source>
</reference>
<reference key="4">
    <citation type="journal article" date="2013" name="PLoS ONE">
        <title>Soybean toxin (SBTX) impairs fungal growth by interfering with molecular transport, carbohydrate/amino acid metabolism and drug/stress responses.</title>
        <authorList>
            <person name="Morais J.K."/>
            <person name="Bader O."/>
            <person name="Weig M."/>
            <person name="Oliveira J.T."/>
            <person name="Arantes M.R."/>
            <person name="Gomes V.M."/>
            <person name="Da Cunha M."/>
            <person name="Oliveira H.D."/>
            <person name="Sousa D.O."/>
            <person name="Lourencao A.L."/>
            <person name="Vasconcelos I.M."/>
        </authorList>
    </citation>
    <scope>FUNCTION</scope>
</reference>
<name>SBTXA_SOYBN</name>
<accession>P86520</accession>
<keyword id="KW-0929">Antimicrobial</keyword>
<keyword id="KW-0903">Direct protein sequencing</keyword>
<keyword id="KW-1015">Disulfide bond</keyword>
<keyword id="KW-0295">Fungicide</keyword>
<keyword id="KW-0611">Plant defense</keyword>
<keyword id="KW-1185">Reference proteome</keyword>
<keyword id="KW-0800">Toxin</keyword>
<proteinExistence type="evidence at protein level"/>
<evidence type="ECO:0000269" key="1">
    <source>
    </source>
</evidence>
<evidence type="ECO:0000269" key="2">
    <source>
    </source>
</evidence>
<evidence type="ECO:0000269" key="3">
    <source>
    </source>
</evidence>
<evidence type="ECO:0000269" key="4">
    <source ref="2"/>
</evidence>
<evidence type="ECO:0000303" key="5">
    <source>
    </source>
</evidence>
<evidence type="ECO:0000303" key="6">
    <source>
    </source>
</evidence>
<evidence type="ECO:0000305" key="7"/>
<sequence length="25" mass="2728">ADPTFGFTPLGLSEKANLQIMKAYD</sequence>
<feature type="chain" id="PRO_0000395397" description="Soybean toxin 27 kDa chain">
    <location>
        <begin position="1"/>
        <end position="25" status="greater than"/>
    </location>
</feature>
<feature type="non-terminal residue" evidence="5">
    <location>
        <position position="25"/>
    </location>
</feature>
<protein>
    <recommendedName>
        <fullName evidence="5">Soybean toxin 27 kDa chain</fullName>
        <shortName evidence="5">SBTX 27 kDa chain</shortName>
    </recommendedName>
</protein>
<comment type="function">
    <text evidence="1 2 3">Involved in plant defense (PubMed:18328522). Inhibits spore germination in C.sojina, A.niger (at concentrations &gt;50 ug/ml) and P.herguei but not in F.oxysporum and F.solani (PubMed:18328522, PubMed:20831249). Does not inhibit vegetative mycelial growth (PubMed:20831249). Inhibits growth of C.albicans and K.marxiannus but not P.membranifaciens or C.parapsilosis (PubMed:20831249, PubMed:23894655). Probably acts by affecting the cell membrane (PubMed:20831249). Does not have urease, chitinase, beta-1,3-glucanase or hemagglutination activities (PubMed:18328522, PubMed:20831249). Does not inhibit trypsin (PubMed:18328522). Injection into mice produces toxic effects such as dyspnea, tonic-clonic convulsion and death (PubMed:18328522).</text>
</comment>
<comment type="biophysicochemical properties">
    <phDependence>
        <text evidence="1">Activity decreases below pH 5.5 and above pH 8.0.</text>
    </phDependence>
</comment>
<comment type="subunit">
    <text evidence="1">Heterodimer of a 27 kDa subunit and a 17 kDa subunit; disulfide-linked.</text>
</comment>
<comment type="tissue specificity">
    <text evidence="4">Expressed in seeds, leaves, roots and stem (at protein level).</text>
</comment>
<comment type="induction">
    <text evidence="4">In seeds, induced by jasmonate.</text>
</comment>
<comment type="PTM">
    <text evidence="1">SBTX is known to be glycosylated but it is not known which one of its two subunits is modified; contains 5% carbohydrates.</text>
</comment>
<comment type="toxic dose">
    <text evidence="1 2">LD(50) is 5.6 mg/kg by intraperitoneal injection into mice.</text>
</comment>
<comment type="miscellaneous">
    <text evidence="1">On the 2D-gel the determined pI of SBTX is: 8.2, its MW is: 44 kDa.</text>
</comment>
<organism>
    <name type="scientific">Glycine max</name>
    <name type="common">Soybean</name>
    <name type="synonym">Glycine hispida</name>
    <dbReference type="NCBI Taxonomy" id="3847"/>
    <lineage>
        <taxon>Eukaryota</taxon>
        <taxon>Viridiplantae</taxon>
        <taxon>Streptophyta</taxon>
        <taxon>Embryophyta</taxon>
        <taxon>Tracheophyta</taxon>
        <taxon>Spermatophyta</taxon>
        <taxon>Magnoliopsida</taxon>
        <taxon>eudicotyledons</taxon>
        <taxon>Gunneridae</taxon>
        <taxon>Pentapetalae</taxon>
        <taxon>rosids</taxon>
        <taxon>fabids</taxon>
        <taxon>Fabales</taxon>
        <taxon>Fabaceae</taxon>
        <taxon>Papilionoideae</taxon>
        <taxon>50 kb inversion clade</taxon>
        <taxon>NPAAA clade</taxon>
        <taxon>indigoferoid/millettioid clade</taxon>
        <taxon>Phaseoleae</taxon>
        <taxon>Glycine</taxon>
        <taxon>Glycine subgen. Soja</taxon>
    </lineage>
</organism>